<dbReference type="EMBL" id="CP001164">
    <property type="protein sequence ID" value="ACI37026.1"/>
    <property type="molecule type" value="Genomic_DNA"/>
</dbReference>
<dbReference type="RefSeq" id="WP_000609663.1">
    <property type="nucleotide sequence ID" value="NC_011353.1"/>
</dbReference>
<dbReference type="SMR" id="B5Z2G2"/>
<dbReference type="GeneID" id="75169672"/>
<dbReference type="KEGG" id="ecf:ECH74115_5669"/>
<dbReference type="HOGENOM" id="CLU_168367_0_0_6"/>
<dbReference type="GO" id="GO:0045283">
    <property type="term" value="C:fumarate reductase complex"/>
    <property type="evidence" value="ECO:0007669"/>
    <property type="project" value="UniProtKB-UniRule"/>
</dbReference>
<dbReference type="GO" id="GO:0005886">
    <property type="term" value="C:plasma membrane"/>
    <property type="evidence" value="ECO:0007669"/>
    <property type="project" value="UniProtKB-SubCell"/>
</dbReference>
<dbReference type="GO" id="GO:0000104">
    <property type="term" value="F:succinate dehydrogenase activity"/>
    <property type="evidence" value="ECO:0007669"/>
    <property type="project" value="UniProtKB-UniRule"/>
</dbReference>
<dbReference type="GO" id="GO:0006106">
    <property type="term" value="P:fumarate metabolic process"/>
    <property type="evidence" value="ECO:0007669"/>
    <property type="project" value="InterPro"/>
</dbReference>
<dbReference type="CDD" id="cd00547">
    <property type="entry name" value="QFR_TypeD_subunitD"/>
    <property type="match status" value="1"/>
</dbReference>
<dbReference type="FunFam" id="1.20.1300.10:FF:000002">
    <property type="entry name" value="Fumarate reductase subunit D"/>
    <property type="match status" value="1"/>
</dbReference>
<dbReference type="Gene3D" id="1.20.1300.10">
    <property type="entry name" value="Fumarate reductase/succinate dehydrogenase, transmembrane subunit"/>
    <property type="match status" value="1"/>
</dbReference>
<dbReference type="HAMAP" id="MF_00709">
    <property type="entry name" value="Fumarate_red_D"/>
    <property type="match status" value="1"/>
</dbReference>
<dbReference type="InterPro" id="IPR003418">
    <property type="entry name" value="Fumarate_red_D"/>
</dbReference>
<dbReference type="InterPro" id="IPR034804">
    <property type="entry name" value="SQR/QFR_C/D"/>
</dbReference>
<dbReference type="NCBIfam" id="NF003977">
    <property type="entry name" value="PRK05470.1-1"/>
    <property type="match status" value="1"/>
</dbReference>
<dbReference type="Pfam" id="PF02313">
    <property type="entry name" value="Fumarate_red_D"/>
    <property type="match status" value="1"/>
</dbReference>
<dbReference type="PIRSF" id="PIRSF000179">
    <property type="entry name" value="FrdD"/>
    <property type="match status" value="1"/>
</dbReference>
<dbReference type="SUPFAM" id="SSF81343">
    <property type="entry name" value="Fumarate reductase respiratory complex transmembrane subunits"/>
    <property type="match status" value="1"/>
</dbReference>
<keyword id="KW-0997">Cell inner membrane</keyword>
<keyword id="KW-1003">Cell membrane</keyword>
<keyword id="KW-0472">Membrane</keyword>
<keyword id="KW-0812">Transmembrane</keyword>
<keyword id="KW-1133">Transmembrane helix</keyword>
<reference key="1">
    <citation type="journal article" date="2011" name="Proc. Natl. Acad. Sci. U.S.A.">
        <title>Genomic anatomy of Escherichia coli O157:H7 outbreaks.</title>
        <authorList>
            <person name="Eppinger M."/>
            <person name="Mammel M.K."/>
            <person name="Leclerc J.E."/>
            <person name="Ravel J."/>
            <person name="Cebula T.A."/>
        </authorList>
    </citation>
    <scope>NUCLEOTIDE SEQUENCE [LARGE SCALE GENOMIC DNA]</scope>
    <source>
        <strain>EC4115 / EHEC</strain>
    </source>
</reference>
<gene>
    <name evidence="1" type="primary">frdD</name>
    <name type="ordered locus">ECH74115_5669</name>
</gene>
<name>FRDD_ECO5E</name>
<comment type="function">
    <text evidence="1">Two distinct, membrane-bound, FAD-containing enzymes are responsible for the catalysis of fumarate and succinate interconversion; fumarate reductase is used in anaerobic growth, and succinate dehydrogenase is used in aerobic growth. Anchors the catalytic components of the fumarate reductase complex to the cell inner membrane, binds quinones.</text>
</comment>
<comment type="subunit">
    <text evidence="1">Part of an enzyme complex containing four subunits: a flavoprotein (FrdA), an iron-sulfur protein (FrdB), and two hydrophobic anchor proteins (FrdC and FrdD).</text>
</comment>
<comment type="subcellular location">
    <subcellularLocation>
        <location evidence="1">Cell inner membrane</location>
        <topology evidence="1">Multi-pass membrane protein</topology>
    </subcellularLocation>
</comment>
<comment type="similarity">
    <text evidence="1">Belongs to the FrdD family.</text>
</comment>
<protein>
    <recommendedName>
        <fullName evidence="1">Fumarate reductase subunit D</fullName>
    </recommendedName>
    <alternativeName>
        <fullName evidence="1">Fumarate reductase 13 kDa hydrophobic protein</fullName>
    </alternativeName>
    <alternativeName>
        <fullName evidence="1">Quinol-fumarate reductase subunit D</fullName>
        <shortName evidence="1">QFR subunit D</shortName>
    </alternativeName>
</protein>
<feature type="chain" id="PRO_1000132397" description="Fumarate reductase subunit D">
    <location>
        <begin position="1"/>
        <end position="119"/>
    </location>
</feature>
<feature type="transmembrane region" description="Helical" evidence="1">
    <location>
        <begin position="26"/>
        <end position="46"/>
    </location>
</feature>
<feature type="transmembrane region" description="Helical" evidence="1">
    <location>
        <begin position="55"/>
        <end position="75"/>
    </location>
</feature>
<feature type="transmembrane region" description="Helical" evidence="1">
    <location>
        <begin position="99"/>
        <end position="119"/>
    </location>
</feature>
<accession>B5Z2G2</accession>
<evidence type="ECO:0000255" key="1">
    <source>
        <dbReference type="HAMAP-Rule" id="MF_00709"/>
    </source>
</evidence>
<organism>
    <name type="scientific">Escherichia coli O157:H7 (strain EC4115 / EHEC)</name>
    <dbReference type="NCBI Taxonomy" id="444450"/>
    <lineage>
        <taxon>Bacteria</taxon>
        <taxon>Pseudomonadati</taxon>
        <taxon>Pseudomonadota</taxon>
        <taxon>Gammaproteobacteria</taxon>
        <taxon>Enterobacterales</taxon>
        <taxon>Enterobacteriaceae</taxon>
        <taxon>Escherichia</taxon>
    </lineage>
</organism>
<sequence>MINPNPKRSDEPVFWGLFGAGGMWSAIIAPVMILLVGILLPLGLFPGDALSYERVLAFAQSFIGRVFLFLMIVLPLWCGLHRMHHAMHDLKIHVPAGKWVFYGLAAILTVVTLIGVVTI</sequence>
<proteinExistence type="inferred from homology"/>